<accession>A7FI51</accession>
<protein>
    <recommendedName>
        <fullName evidence="1">Putative double-stranded DNA mimic protein YpsIP31758_1954</fullName>
    </recommendedName>
</protein>
<reference key="1">
    <citation type="journal article" date="2007" name="PLoS Genet.">
        <title>The complete genome sequence of Yersinia pseudotuberculosis IP31758, the causative agent of Far East scarlet-like fever.</title>
        <authorList>
            <person name="Eppinger M."/>
            <person name="Rosovitz M.J."/>
            <person name="Fricke W.F."/>
            <person name="Rasko D.A."/>
            <person name="Kokorina G."/>
            <person name="Fayolle C."/>
            <person name="Lindler L.E."/>
            <person name="Carniel E."/>
            <person name="Ravel J."/>
        </authorList>
    </citation>
    <scope>NUCLEOTIDE SEQUENCE [LARGE SCALE GENOMIC DNA]</scope>
    <source>
        <strain>IP 31758</strain>
    </source>
</reference>
<gene>
    <name type="ordered locus">YpsIP31758_1954</name>
</gene>
<organism>
    <name type="scientific">Yersinia pseudotuberculosis serotype O:1b (strain IP 31758)</name>
    <dbReference type="NCBI Taxonomy" id="349747"/>
    <lineage>
        <taxon>Bacteria</taxon>
        <taxon>Pseudomonadati</taxon>
        <taxon>Pseudomonadota</taxon>
        <taxon>Gammaproteobacteria</taxon>
        <taxon>Enterobacterales</taxon>
        <taxon>Yersiniaceae</taxon>
        <taxon>Yersinia</taxon>
    </lineage>
</organism>
<comment type="function">
    <text evidence="1">May act as a double-stranded DNA (dsDNA) mimic. Probably regulates the activity of a dsDNA-binding protein.</text>
</comment>
<comment type="similarity">
    <text evidence="1">Belongs to the putative dsDNA mimic protein family.</text>
</comment>
<evidence type="ECO:0000255" key="1">
    <source>
        <dbReference type="HAMAP-Rule" id="MF_00680"/>
    </source>
</evidence>
<name>Y1954_YERP3</name>
<sequence>MDLNNRLTEDETLEQAYDIFLELAGDNLDPADILLFNLQFEERGGAELFDPAEDWQEHVDFDINPDFFAEVVIGLADSDGEEINDIFARVLLCREKDHKLCHILWKE</sequence>
<dbReference type="EMBL" id="CP000720">
    <property type="protein sequence ID" value="ABS46743.1"/>
    <property type="molecule type" value="Genomic_DNA"/>
</dbReference>
<dbReference type="RefSeq" id="WP_002210649.1">
    <property type="nucleotide sequence ID" value="NC_009708.1"/>
</dbReference>
<dbReference type="SMR" id="A7FI51"/>
<dbReference type="KEGG" id="ypi:YpsIP31758_1954"/>
<dbReference type="HOGENOM" id="CLU_143392_0_0_6"/>
<dbReference type="Proteomes" id="UP000002412">
    <property type="component" value="Chromosome"/>
</dbReference>
<dbReference type="Gene3D" id="3.10.450.140">
    <property type="entry name" value="dsDNA mimic, putative"/>
    <property type="match status" value="1"/>
</dbReference>
<dbReference type="HAMAP" id="MF_00680">
    <property type="entry name" value="Put_dsDNA_mimic"/>
    <property type="match status" value="1"/>
</dbReference>
<dbReference type="InterPro" id="IPR007376">
    <property type="entry name" value="dsDNA_mimic_put"/>
</dbReference>
<dbReference type="InterPro" id="IPR036763">
    <property type="entry name" value="Put_dsDNA_mimic_sf"/>
</dbReference>
<dbReference type="NCBIfam" id="NF003469">
    <property type="entry name" value="PRK05094.1"/>
    <property type="match status" value="1"/>
</dbReference>
<dbReference type="Pfam" id="PF04269">
    <property type="entry name" value="DUF440"/>
    <property type="match status" value="1"/>
</dbReference>
<dbReference type="PIRSF" id="PIRSF004916">
    <property type="entry name" value="UCP004916"/>
    <property type="match status" value="1"/>
</dbReference>
<dbReference type="SUPFAM" id="SSF102816">
    <property type="entry name" value="Putative dsDNA mimic"/>
    <property type="match status" value="1"/>
</dbReference>
<proteinExistence type="inferred from homology"/>
<feature type="chain" id="PRO_1000061974" description="Putative double-stranded DNA mimic protein YpsIP31758_1954">
    <location>
        <begin position="1"/>
        <end position="107"/>
    </location>
</feature>